<accession>A8LX83</accession>
<feature type="chain" id="PRO_1000074556" description="Phospho-N-acetylmuramoyl-pentapeptide-transferase">
    <location>
        <begin position="1"/>
        <end position="374"/>
    </location>
</feature>
<feature type="transmembrane region" description="Helical" evidence="1">
    <location>
        <begin position="3"/>
        <end position="23"/>
    </location>
</feature>
<feature type="transmembrane region" description="Helical" evidence="1">
    <location>
        <begin position="52"/>
        <end position="72"/>
    </location>
</feature>
<feature type="transmembrane region" description="Helical" evidence="1">
    <location>
        <begin position="85"/>
        <end position="105"/>
    </location>
</feature>
<feature type="transmembrane region" description="Helical" evidence="1">
    <location>
        <begin position="125"/>
        <end position="145"/>
    </location>
</feature>
<feature type="transmembrane region" description="Helical" evidence="1">
    <location>
        <begin position="170"/>
        <end position="190"/>
    </location>
</feature>
<feature type="transmembrane region" description="Helical" evidence="1">
    <location>
        <begin position="201"/>
        <end position="221"/>
    </location>
</feature>
<feature type="transmembrane region" description="Helical" evidence="1">
    <location>
        <begin position="244"/>
        <end position="264"/>
    </location>
</feature>
<feature type="transmembrane region" description="Helical" evidence="1">
    <location>
        <begin position="271"/>
        <end position="291"/>
    </location>
</feature>
<feature type="transmembrane region" description="Helical" evidence="1">
    <location>
        <begin position="294"/>
        <end position="314"/>
    </location>
</feature>
<feature type="transmembrane region" description="Helical" evidence="1">
    <location>
        <begin position="350"/>
        <end position="370"/>
    </location>
</feature>
<name>MRAY_SALAI</name>
<proteinExistence type="inferred from homology"/>
<keyword id="KW-0131">Cell cycle</keyword>
<keyword id="KW-0132">Cell division</keyword>
<keyword id="KW-1003">Cell membrane</keyword>
<keyword id="KW-0133">Cell shape</keyword>
<keyword id="KW-0961">Cell wall biogenesis/degradation</keyword>
<keyword id="KW-0460">Magnesium</keyword>
<keyword id="KW-0472">Membrane</keyword>
<keyword id="KW-0479">Metal-binding</keyword>
<keyword id="KW-0573">Peptidoglycan synthesis</keyword>
<keyword id="KW-0808">Transferase</keyword>
<keyword id="KW-0812">Transmembrane</keyword>
<keyword id="KW-1133">Transmembrane helix</keyword>
<organism>
    <name type="scientific">Salinispora arenicola (strain CNS-205)</name>
    <dbReference type="NCBI Taxonomy" id="391037"/>
    <lineage>
        <taxon>Bacteria</taxon>
        <taxon>Bacillati</taxon>
        <taxon>Actinomycetota</taxon>
        <taxon>Actinomycetes</taxon>
        <taxon>Micromonosporales</taxon>
        <taxon>Micromonosporaceae</taxon>
        <taxon>Salinispora</taxon>
    </lineage>
</organism>
<evidence type="ECO:0000255" key="1">
    <source>
        <dbReference type="HAMAP-Rule" id="MF_00038"/>
    </source>
</evidence>
<gene>
    <name evidence="1" type="primary">mraY</name>
    <name type="ordered locus">Sare_3441</name>
</gene>
<protein>
    <recommendedName>
        <fullName evidence="1">Phospho-N-acetylmuramoyl-pentapeptide-transferase</fullName>
        <ecNumber evidence="1">2.7.8.13</ecNumber>
    </recommendedName>
    <alternativeName>
        <fullName evidence="1">UDP-MurNAc-pentapeptide phosphotransferase</fullName>
    </alternativeName>
</protein>
<reference key="1">
    <citation type="submission" date="2007-10" db="EMBL/GenBank/DDBJ databases">
        <title>Complete sequence of Salinispora arenicola CNS-205.</title>
        <authorList>
            <consortium name="US DOE Joint Genome Institute"/>
            <person name="Copeland A."/>
            <person name="Lucas S."/>
            <person name="Lapidus A."/>
            <person name="Barry K."/>
            <person name="Glavina del Rio T."/>
            <person name="Dalin E."/>
            <person name="Tice H."/>
            <person name="Pitluck S."/>
            <person name="Foster B."/>
            <person name="Schmutz J."/>
            <person name="Larimer F."/>
            <person name="Land M."/>
            <person name="Hauser L."/>
            <person name="Kyrpides N."/>
            <person name="Ivanova N."/>
            <person name="Jensen P.R."/>
            <person name="Moore B.S."/>
            <person name="Penn K."/>
            <person name="Jenkins C."/>
            <person name="Udwary D."/>
            <person name="Xiang L."/>
            <person name="Gontang E."/>
            <person name="Richardson P."/>
        </authorList>
    </citation>
    <scope>NUCLEOTIDE SEQUENCE [LARGE SCALE GENOMIC DNA]</scope>
    <source>
        <strain>CNS-205</strain>
    </source>
</reference>
<sequence length="374" mass="39743">MRAVIVAVGVAFLVSLFCTPIAIRVFTRLKAGQPIRAEGPVMHQGKKGTPTMGGVVFILATVIAYVAGHLALTTLPDAQIAQVEPTITALVLLGLMVFSGAVGFIDDFLKVRKRHSGGLNKRGKLLGQILVGAVFGVIALYFPSTMTDAQGTLTNTETVGSTTLSFIRDIPALELTKVGAVVLFIFVVMAATNGVNLTDGLDGLATGASVMVLAAYALIAFWQYRHWCADPNYTQDYCYSVRDPLEIALIAGAAAGACVGFLWWNTSPARIFMGDTGALGLGGLIAGMAMSTRTILLLPIIGGLFVIITMSVVIQIISFRTTGKRVFRMSPLQHHFELAGWSEVNIVVRFWIIAGIGVAIALGLFYSEFLASVG</sequence>
<comment type="function">
    <text evidence="1">Catalyzes the initial step of the lipid cycle reactions in the biosynthesis of the cell wall peptidoglycan: transfers peptidoglycan precursor phospho-MurNAc-pentapeptide from UDP-MurNAc-pentapeptide onto the lipid carrier undecaprenyl phosphate, yielding undecaprenyl-pyrophosphoryl-MurNAc-pentapeptide, known as lipid I.</text>
</comment>
<comment type="catalytic activity">
    <reaction evidence="1">
        <text>UDP-N-acetyl-alpha-D-muramoyl-L-alanyl-gamma-D-glutamyl-meso-2,6-diaminopimeloyl-D-alanyl-D-alanine + di-trans,octa-cis-undecaprenyl phosphate = di-trans,octa-cis-undecaprenyl diphospho-N-acetyl-alpha-D-muramoyl-L-alanyl-D-glutamyl-meso-2,6-diaminopimeloyl-D-alanyl-D-alanine + UMP</text>
        <dbReference type="Rhea" id="RHEA:28386"/>
        <dbReference type="ChEBI" id="CHEBI:57865"/>
        <dbReference type="ChEBI" id="CHEBI:60392"/>
        <dbReference type="ChEBI" id="CHEBI:61386"/>
        <dbReference type="ChEBI" id="CHEBI:61387"/>
        <dbReference type="EC" id="2.7.8.13"/>
    </reaction>
</comment>
<comment type="cofactor">
    <cofactor evidence="1">
        <name>Mg(2+)</name>
        <dbReference type="ChEBI" id="CHEBI:18420"/>
    </cofactor>
</comment>
<comment type="pathway">
    <text evidence="1">Cell wall biogenesis; peptidoglycan biosynthesis.</text>
</comment>
<comment type="subcellular location">
    <subcellularLocation>
        <location evidence="1">Cell membrane</location>
        <topology evidence="1">Multi-pass membrane protein</topology>
    </subcellularLocation>
</comment>
<comment type="similarity">
    <text evidence="1">Belongs to the glycosyltransferase 4 family. MraY subfamily.</text>
</comment>
<dbReference type="EC" id="2.7.8.13" evidence="1"/>
<dbReference type="EMBL" id="CP000850">
    <property type="protein sequence ID" value="ABV99243.1"/>
    <property type="molecule type" value="Genomic_DNA"/>
</dbReference>
<dbReference type="SMR" id="A8LX83"/>
<dbReference type="STRING" id="391037.Sare_3441"/>
<dbReference type="KEGG" id="saq:Sare_3441"/>
<dbReference type="PATRIC" id="fig|391037.6.peg.3469"/>
<dbReference type="eggNOG" id="COG0472">
    <property type="taxonomic scope" value="Bacteria"/>
</dbReference>
<dbReference type="HOGENOM" id="CLU_023982_0_0_11"/>
<dbReference type="OrthoDB" id="9805475at2"/>
<dbReference type="UniPathway" id="UPA00219"/>
<dbReference type="GO" id="GO:0005886">
    <property type="term" value="C:plasma membrane"/>
    <property type="evidence" value="ECO:0007669"/>
    <property type="project" value="UniProtKB-SubCell"/>
</dbReference>
<dbReference type="GO" id="GO:0046872">
    <property type="term" value="F:metal ion binding"/>
    <property type="evidence" value="ECO:0007669"/>
    <property type="project" value="UniProtKB-KW"/>
</dbReference>
<dbReference type="GO" id="GO:0008963">
    <property type="term" value="F:phospho-N-acetylmuramoyl-pentapeptide-transferase activity"/>
    <property type="evidence" value="ECO:0007669"/>
    <property type="project" value="UniProtKB-UniRule"/>
</dbReference>
<dbReference type="GO" id="GO:0051992">
    <property type="term" value="F:UDP-N-acetylmuramoyl-L-alanyl-D-glutamyl-meso-2,6-diaminopimelyl-D-alanyl-D-alanine:undecaprenyl-phosphate transferase activity"/>
    <property type="evidence" value="ECO:0007669"/>
    <property type="project" value="RHEA"/>
</dbReference>
<dbReference type="GO" id="GO:0051301">
    <property type="term" value="P:cell division"/>
    <property type="evidence" value="ECO:0007669"/>
    <property type="project" value="UniProtKB-KW"/>
</dbReference>
<dbReference type="GO" id="GO:0071555">
    <property type="term" value="P:cell wall organization"/>
    <property type="evidence" value="ECO:0007669"/>
    <property type="project" value="UniProtKB-KW"/>
</dbReference>
<dbReference type="GO" id="GO:0009252">
    <property type="term" value="P:peptidoglycan biosynthetic process"/>
    <property type="evidence" value="ECO:0007669"/>
    <property type="project" value="UniProtKB-UniRule"/>
</dbReference>
<dbReference type="GO" id="GO:0008360">
    <property type="term" value="P:regulation of cell shape"/>
    <property type="evidence" value="ECO:0007669"/>
    <property type="project" value="UniProtKB-KW"/>
</dbReference>
<dbReference type="CDD" id="cd06852">
    <property type="entry name" value="GT_MraY"/>
    <property type="match status" value="1"/>
</dbReference>
<dbReference type="HAMAP" id="MF_00038">
    <property type="entry name" value="MraY"/>
    <property type="match status" value="1"/>
</dbReference>
<dbReference type="InterPro" id="IPR000715">
    <property type="entry name" value="Glycosyl_transferase_4"/>
</dbReference>
<dbReference type="InterPro" id="IPR003524">
    <property type="entry name" value="PNAcMuramoyl-5peptid_Trfase"/>
</dbReference>
<dbReference type="InterPro" id="IPR018480">
    <property type="entry name" value="PNAcMuramoyl-5peptid_Trfase_CS"/>
</dbReference>
<dbReference type="NCBIfam" id="TIGR00445">
    <property type="entry name" value="mraY"/>
    <property type="match status" value="1"/>
</dbReference>
<dbReference type="PANTHER" id="PTHR22926">
    <property type="entry name" value="PHOSPHO-N-ACETYLMURAMOYL-PENTAPEPTIDE-TRANSFERASE"/>
    <property type="match status" value="1"/>
</dbReference>
<dbReference type="PANTHER" id="PTHR22926:SF5">
    <property type="entry name" value="PHOSPHO-N-ACETYLMURAMOYL-PENTAPEPTIDE-TRANSFERASE HOMOLOG"/>
    <property type="match status" value="1"/>
</dbReference>
<dbReference type="Pfam" id="PF00953">
    <property type="entry name" value="Glycos_transf_4"/>
    <property type="match status" value="1"/>
</dbReference>
<dbReference type="Pfam" id="PF10555">
    <property type="entry name" value="MraY_sig1"/>
    <property type="match status" value="1"/>
</dbReference>
<dbReference type="PROSITE" id="PS01347">
    <property type="entry name" value="MRAY_1"/>
    <property type="match status" value="1"/>
</dbReference>
<dbReference type="PROSITE" id="PS01348">
    <property type="entry name" value="MRAY_2"/>
    <property type="match status" value="1"/>
</dbReference>